<keyword id="KW-0067">ATP-binding</keyword>
<keyword id="KW-0436">Ligase</keyword>
<keyword id="KW-0460">Magnesium</keyword>
<keyword id="KW-0479">Metal-binding</keyword>
<keyword id="KW-0547">Nucleotide-binding</keyword>
<keyword id="KW-1185">Reference proteome</keyword>
<keyword id="KW-0816">Tricarboxylic acid cycle</keyword>
<accession>A1WLG5</accession>
<evidence type="ECO:0000255" key="1">
    <source>
        <dbReference type="HAMAP-Rule" id="MF_00558"/>
    </source>
</evidence>
<organism>
    <name type="scientific">Verminephrobacter eiseniae (strain EF01-2)</name>
    <dbReference type="NCBI Taxonomy" id="391735"/>
    <lineage>
        <taxon>Bacteria</taxon>
        <taxon>Pseudomonadati</taxon>
        <taxon>Pseudomonadota</taxon>
        <taxon>Betaproteobacteria</taxon>
        <taxon>Burkholderiales</taxon>
        <taxon>Comamonadaceae</taxon>
        <taxon>Verminephrobacter</taxon>
    </lineage>
</organism>
<comment type="function">
    <text evidence="1">Succinyl-CoA synthetase functions in the citric acid cycle (TCA), coupling the hydrolysis of succinyl-CoA to the synthesis of either ATP or GTP and thus represents the only step of substrate-level phosphorylation in the TCA. The beta subunit provides nucleotide specificity of the enzyme and binds the substrate succinate, while the binding sites for coenzyme A and phosphate are found in the alpha subunit.</text>
</comment>
<comment type="catalytic activity">
    <reaction evidence="1">
        <text>succinate + ATP + CoA = succinyl-CoA + ADP + phosphate</text>
        <dbReference type="Rhea" id="RHEA:17661"/>
        <dbReference type="ChEBI" id="CHEBI:30031"/>
        <dbReference type="ChEBI" id="CHEBI:30616"/>
        <dbReference type="ChEBI" id="CHEBI:43474"/>
        <dbReference type="ChEBI" id="CHEBI:57287"/>
        <dbReference type="ChEBI" id="CHEBI:57292"/>
        <dbReference type="ChEBI" id="CHEBI:456216"/>
        <dbReference type="EC" id="6.2.1.5"/>
    </reaction>
    <physiologicalReaction direction="right-to-left" evidence="1">
        <dbReference type="Rhea" id="RHEA:17663"/>
    </physiologicalReaction>
</comment>
<comment type="catalytic activity">
    <reaction evidence="1">
        <text>GTP + succinate + CoA = succinyl-CoA + GDP + phosphate</text>
        <dbReference type="Rhea" id="RHEA:22120"/>
        <dbReference type="ChEBI" id="CHEBI:30031"/>
        <dbReference type="ChEBI" id="CHEBI:37565"/>
        <dbReference type="ChEBI" id="CHEBI:43474"/>
        <dbReference type="ChEBI" id="CHEBI:57287"/>
        <dbReference type="ChEBI" id="CHEBI:57292"/>
        <dbReference type="ChEBI" id="CHEBI:58189"/>
    </reaction>
    <physiologicalReaction direction="right-to-left" evidence="1">
        <dbReference type="Rhea" id="RHEA:22122"/>
    </physiologicalReaction>
</comment>
<comment type="cofactor">
    <cofactor evidence="1">
        <name>Mg(2+)</name>
        <dbReference type="ChEBI" id="CHEBI:18420"/>
    </cofactor>
    <text evidence="1">Binds 1 Mg(2+) ion per subunit.</text>
</comment>
<comment type="pathway">
    <text evidence="1">Carbohydrate metabolism; tricarboxylic acid cycle; succinate from succinyl-CoA (ligase route): step 1/1.</text>
</comment>
<comment type="subunit">
    <text evidence="1">Heterotetramer of two alpha and two beta subunits.</text>
</comment>
<comment type="similarity">
    <text evidence="1">Belongs to the succinate/malate CoA ligase beta subunit family.</text>
</comment>
<name>SUCC_VEREI</name>
<proteinExistence type="inferred from homology"/>
<sequence length="388" mass="41493">MKIHEYQGKDILRQFGVPVPRGIPAFTVQEAVEAAQKLGGPVWVVKAQIHAGGRGKGGGVQLAKTIDEVRRLAGSMLGMQLKTHQTGPEGQKVRRLYIEEGADIGKEYYLSIVTDRATQKLAFIASSEGGMDIEEVKRAKPEMIITEFVDPLAGLGPEQALKIAVGIGLPAPAQAQAQAVDIMRRLYQCYMDTDASLLEINPLNCDGQNRLTALDAKFNFDANALWRHPEIVAYRDFEEEDPAEVLASKFDLAYISMDGNIGCLVNGAGLAMATMDTIKLFGGAPANFLDVGGGATAEKVTEAFKIMLGNPKVKGILVNIFGGIMRCDTIATGVISACKAVNLSVPLVVRMKGTNEEPGKKLLAESGLPIIAADTMADAAQRIVAAVR</sequence>
<gene>
    <name evidence="1" type="primary">sucC</name>
    <name type="ordered locus">Veis_2730</name>
</gene>
<feature type="chain" id="PRO_1000082255" description="Succinate--CoA ligase [ADP-forming] subunit beta">
    <location>
        <begin position="1"/>
        <end position="388"/>
    </location>
</feature>
<feature type="domain" description="ATP-grasp" evidence="1">
    <location>
        <begin position="9"/>
        <end position="246"/>
    </location>
</feature>
<feature type="binding site" evidence="1">
    <location>
        <position position="46"/>
    </location>
    <ligand>
        <name>ATP</name>
        <dbReference type="ChEBI" id="CHEBI:30616"/>
    </ligand>
</feature>
<feature type="binding site" evidence="1">
    <location>
        <begin position="53"/>
        <end position="55"/>
    </location>
    <ligand>
        <name>ATP</name>
        <dbReference type="ChEBI" id="CHEBI:30616"/>
    </ligand>
</feature>
<feature type="binding site" evidence="1">
    <location>
        <position position="99"/>
    </location>
    <ligand>
        <name>ATP</name>
        <dbReference type="ChEBI" id="CHEBI:30616"/>
    </ligand>
</feature>
<feature type="binding site" evidence="1">
    <location>
        <position position="102"/>
    </location>
    <ligand>
        <name>ATP</name>
        <dbReference type="ChEBI" id="CHEBI:30616"/>
    </ligand>
</feature>
<feature type="binding site" evidence="1">
    <location>
        <position position="107"/>
    </location>
    <ligand>
        <name>ATP</name>
        <dbReference type="ChEBI" id="CHEBI:30616"/>
    </ligand>
</feature>
<feature type="binding site" evidence="1">
    <location>
        <position position="201"/>
    </location>
    <ligand>
        <name>Mg(2+)</name>
        <dbReference type="ChEBI" id="CHEBI:18420"/>
    </ligand>
</feature>
<feature type="binding site" evidence="1">
    <location>
        <position position="215"/>
    </location>
    <ligand>
        <name>Mg(2+)</name>
        <dbReference type="ChEBI" id="CHEBI:18420"/>
    </ligand>
</feature>
<feature type="binding site" evidence="1">
    <location>
        <position position="266"/>
    </location>
    <ligand>
        <name>substrate</name>
        <note>ligand shared with subunit alpha</note>
    </ligand>
</feature>
<feature type="binding site" evidence="1">
    <location>
        <begin position="323"/>
        <end position="325"/>
    </location>
    <ligand>
        <name>substrate</name>
        <note>ligand shared with subunit alpha</note>
    </ligand>
</feature>
<dbReference type="EC" id="6.2.1.5" evidence="1"/>
<dbReference type="EMBL" id="CP000542">
    <property type="protein sequence ID" value="ABM58472.1"/>
    <property type="molecule type" value="Genomic_DNA"/>
</dbReference>
<dbReference type="RefSeq" id="WP_011810470.1">
    <property type="nucleotide sequence ID" value="NC_008786.1"/>
</dbReference>
<dbReference type="SMR" id="A1WLG5"/>
<dbReference type="STRING" id="391735.Veis_2730"/>
<dbReference type="GeneID" id="76461236"/>
<dbReference type="KEGG" id="vei:Veis_2730"/>
<dbReference type="eggNOG" id="COG0045">
    <property type="taxonomic scope" value="Bacteria"/>
</dbReference>
<dbReference type="HOGENOM" id="CLU_037430_0_2_4"/>
<dbReference type="OrthoDB" id="9802602at2"/>
<dbReference type="UniPathway" id="UPA00223">
    <property type="reaction ID" value="UER00999"/>
</dbReference>
<dbReference type="Proteomes" id="UP000000374">
    <property type="component" value="Chromosome"/>
</dbReference>
<dbReference type="GO" id="GO:0005829">
    <property type="term" value="C:cytosol"/>
    <property type="evidence" value="ECO:0007669"/>
    <property type="project" value="TreeGrafter"/>
</dbReference>
<dbReference type="GO" id="GO:0042709">
    <property type="term" value="C:succinate-CoA ligase complex"/>
    <property type="evidence" value="ECO:0007669"/>
    <property type="project" value="TreeGrafter"/>
</dbReference>
<dbReference type="GO" id="GO:0005524">
    <property type="term" value="F:ATP binding"/>
    <property type="evidence" value="ECO:0007669"/>
    <property type="project" value="UniProtKB-UniRule"/>
</dbReference>
<dbReference type="GO" id="GO:0000287">
    <property type="term" value="F:magnesium ion binding"/>
    <property type="evidence" value="ECO:0007669"/>
    <property type="project" value="UniProtKB-UniRule"/>
</dbReference>
<dbReference type="GO" id="GO:0004775">
    <property type="term" value="F:succinate-CoA ligase (ADP-forming) activity"/>
    <property type="evidence" value="ECO:0007669"/>
    <property type="project" value="UniProtKB-UniRule"/>
</dbReference>
<dbReference type="GO" id="GO:0004776">
    <property type="term" value="F:succinate-CoA ligase (GDP-forming) activity"/>
    <property type="evidence" value="ECO:0007669"/>
    <property type="project" value="RHEA"/>
</dbReference>
<dbReference type="GO" id="GO:0006104">
    <property type="term" value="P:succinyl-CoA metabolic process"/>
    <property type="evidence" value="ECO:0007669"/>
    <property type="project" value="TreeGrafter"/>
</dbReference>
<dbReference type="GO" id="GO:0006099">
    <property type="term" value="P:tricarboxylic acid cycle"/>
    <property type="evidence" value="ECO:0007669"/>
    <property type="project" value="UniProtKB-UniRule"/>
</dbReference>
<dbReference type="FunFam" id="3.30.1490.20:FF:000002">
    <property type="entry name" value="Succinate--CoA ligase [ADP-forming] subunit beta"/>
    <property type="match status" value="1"/>
</dbReference>
<dbReference type="FunFam" id="3.30.470.20:FF:000002">
    <property type="entry name" value="Succinate--CoA ligase [ADP-forming] subunit beta"/>
    <property type="match status" value="1"/>
</dbReference>
<dbReference type="FunFam" id="3.40.50.261:FF:000001">
    <property type="entry name" value="Succinate--CoA ligase [ADP-forming] subunit beta"/>
    <property type="match status" value="1"/>
</dbReference>
<dbReference type="Gene3D" id="3.30.1490.20">
    <property type="entry name" value="ATP-grasp fold, A domain"/>
    <property type="match status" value="1"/>
</dbReference>
<dbReference type="Gene3D" id="3.30.470.20">
    <property type="entry name" value="ATP-grasp fold, B domain"/>
    <property type="match status" value="1"/>
</dbReference>
<dbReference type="Gene3D" id="3.40.50.261">
    <property type="entry name" value="Succinyl-CoA synthetase domains"/>
    <property type="match status" value="1"/>
</dbReference>
<dbReference type="HAMAP" id="MF_00558">
    <property type="entry name" value="Succ_CoA_beta"/>
    <property type="match status" value="1"/>
</dbReference>
<dbReference type="InterPro" id="IPR011761">
    <property type="entry name" value="ATP-grasp"/>
</dbReference>
<dbReference type="InterPro" id="IPR013650">
    <property type="entry name" value="ATP-grasp_succ-CoA_synth-type"/>
</dbReference>
<dbReference type="InterPro" id="IPR013815">
    <property type="entry name" value="ATP_grasp_subdomain_1"/>
</dbReference>
<dbReference type="InterPro" id="IPR017866">
    <property type="entry name" value="Succ-CoA_synthase_bsu_CS"/>
</dbReference>
<dbReference type="InterPro" id="IPR005811">
    <property type="entry name" value="SUCC_ACL_C"/>
</dbReference>
<dbReference type="InterPro" id="IPR005809">
    <property type="entry name" value="Succ_CoA_ligase-like_bsu"/>
</dbReference>
<dbReference type="InterPro" id="IPR016102">
    <property type="entry name" value="Succinyl-CoA_synth-like"/>
</dbReference>
<dbReference type="NCBIfam" id="NF001913">
    <property type="entry name" value="PRK00696.1"/>
    <property type="match status" value="1"/>
</dbReference>
<dbReference type="NCBIfam" id="TIGR01016">
    <property type="entry name" value="sucCoAbeta"/>
    <property type="match status" value="1"/>
</dbReference>
<dbReference type="PANTHER" id="PTHR11815:SF10">
    <property type="entry name" value="SUCCINATE--COA LIGASE [GDP-FORMING] SUBUNIT BETA, MITOCHONDRIAL"/>
    <property type="match status" value="1"/>
</dbReference>
<dbReference type="PANTHER" id="PTHR11815">
    <property type="entry name" value="SUCCINYL-COA SYNTHETASE BETA CHAIN"/>
    <property type="match status" value="1"/>
</dbReference>
<dbReference type="Pfam" id="PF08442">
    <property type="entry name" value="ATP-grasp_2"/>
    <property type="match status" value="1"/>
</dbReference>
<dbReference type="Pfam" id="PF00549">
    <property type="entry name" value="Ligase_CoA"/>
    <property type="match status" value="1"/>
</dbReference>
<dbReference type="PIRSF" id="PIRSF001554">
    <property type="entry name" value="SucCS_beta"/>
    <property type="match status" value="1"/>
</dbReference>
<dbReference type="SUPFAM" id="SSF56059">
    <property type="entry name" value="Glutathione synthetase ATP-binding domain-like"/>
    <property type="match status" value="1"/>
</dbReference>
<dbReference type="SUPFAM" id="SSF52210">
    <property type="entry name" value="Succinyl-CoA synthetase domains"/>
    <property type="match status" value="1"/>
</dbReference>
<dbReference type="PROSITE" id="PS50975">
    <property type="entry name" value="ATP_GRASP"/>
    <property type="match status" value="1"/>
</dbReference>
<dbReference type="PROSITE" id="PS01217">
    <property type="entry name" value="SUCCINYL_COA_LIG_3"/>
    <property type="match status" value="1"/>
</dbReference>
<protein>
    <recommendedName>
        <fullName evidence="1">Succinate--CoA ligase [ADP-forming] subunit beta</fullName>
        <ecNumber evidence="1">6.2.1.5</ecNumber>
    </recommendedName>
    <alternativeName>
        <fullName evidence="1">Succinyl-CoA synthetase subunit beta</fullName>
        <shortName evidence="1">SCS-beta</shortName>
    </alternativeName>
</protein>
<reference key="1">
    <citation type="submission" date="2006-12" db="EMBL/GenBank/DDBJ databases">
        <title>Complete sequence of chromosome 1 of Verminephrobacter eiseniae EF01-2.</title>
        <authorList>
            <person name="Copeland A."/>
            <person name="Lucas S."/>
            <person name="Lapidus A."/>
            <person name="Barry K."/>
            <person name="Detter J.C."/>
            <person name="Glavina del Rio T."/>
            <person name="Dalin E."/>
            <person name="Tice H."/>
            <person name="Pitluck S."/>
            <person name="Chertkov O."/>
            <person name="Brettin T."/>
            <person name="Bruce D."/>
            <person name="Han C."/>
            <person name="Tapia R."/>
            <person name="Gilna P."/>
            <person name="Schmutz J."/>
            <person name="Larimer F."/>
            <person name="Land M."/>
            <person name="Hauser L."/>
            <person name="Kyrpides N."/>
            <person name="Kim E."/>
            <person name="Stahl D."/>
            <person name="Richardson P."/>
        </authorList>
    </citation>
    <scope>NUCLEOTIDE SEQUENCE [LARGE SCALE GENOMIC DNA]</scope>
    <source>
        <strain>EF01-2</strain>
    </source>
</reference>